<dbReference type="EMBL" id="CP000312">
    <property type="protein sequence ID" value="ABG87788.1"/>
    <property type="molecule type" value="Genomic_DNA"/>
</dbReference>
<dbReference type="RefSeq" id="WP_011592457.1">
    <property type="nucleotide sequence ID" value="NC_008262.1"/>
</dbReference>
<dbReference type="SMR" id="Q0SST2"/>
<dbReference type="KEGG" id="cpr:CPR_1507"/>
<dbReference type="BioCyc" id="CPER289380:GI76-1519-MONOMER"/>
<dbReference type="Proteomes" id="UP000001824">
    <property type="component" value="Chromosome"/>
</dbReference>
<dbReference type="GO" id="GO:0005886">
    <property type="term" value="C:plasma membrane"/>
    <property type="evidence" value="ECO:0007669"/>
    <property type="project" value="UniProtKB-SubCell"/>
</dbReference>
<dbReference type="HAMAP" id="MF_00010">
    <property type="entry name" value="UPF0060"/>
    <property type="match status" value="1"/>
</dbReference>
<dbReference type="InterPro" id="IPR003844">
    <property type="entry name" value="UPF0060"/>
</dbReference>
<dbReference type="NCBIfam" id="NF002586">
    <property type="entry name" value="PRK02237.1"/>
    <property type="match status" value="1"/>
</dbReference>
<dbReference type="PANTHER" id="PTHR36116">
    <property type="entry name" value="UPF0060 MEMBRANE PROTEIN YNFA"/>
    <property type="match status" value="1"/>
</dbReference>
<dbReference type="PANTHER" id="PTHR36116:SF1">
    <property type="entry name" value="UPF0060 MEMBRANE PROTEIN YNFA"/>
    <property type="match status" value="1"/>
</dbReference>
<dbReference type="Pfam" id="PF02694">
    <property type="entry name" value="UPF0060"/>
    <property type="match status" value="1"/>
</dbReference>
<dbReference type="SUPFAM" id="SSF103481">
    <property type="entry name" value="Multidrug resistance efflux transporter EmrE"/>
    <property type="match status" value="1"/>
</dbReference>
<organism>
    <name type="scientific">Clostridium perfringens (strain SM101 / Type A)</name>
    <dbReference type="NCBI Taxonomy" id="289380"/>
    <lineage>
        <taxon>Bacteria</taxon>
        <taxon>Bacillati</taxon>
        <taxon>Bacillota</taxon>
        <taxon>Clostridia</taxon>
        <taxon>Eubacteriales</taxon>
        <taxon>Clostridiaceae</taxon>
        <taxon>Clostridium</taxon>
    </lineage>
</organism>
<proteinExistence type="inferred from homology"/>
<reference key="1">
    <citation type="journal article" date="2006" name="Genome Res.">
        <title>Skewed genomic variability in strains of the toxigenic bacterial pathogen, Clostridium perfringens.</title>
        <authorList>
            <person name="Myers G.S.A."/>
            <person name="Rasko D.A."/>
            <person name="Cheung J.K."/>
            <person name="Ravel J."/>
            <person name="Seshadri R."/>
            <person name="DeBoy R.T."/>
            <person name="Ren Q."/>
            <person name="Varga J."/>
            <person name="Awad M.M."/>
            <person name="Brinkac L.M."/>
            <person name="Daugherty S.C."/>
            <person name="Haft D.H."/>
            <person name="Dodson R.J."/>
            <person name="Madupu R."/>
            <person name="Nelson W.C."/>
            <person name="Rosovitz M.J."/>
            <person name="Sullivan S.A."/>
            <person name="Khouri H."/>
            <person name="Dimitrov G.I."/>
            <person name="Watkins K.L."/>
            <person name="Mulligan S."/>
            <person name="Benton J."/>
            <person name="Radune D."/>
            <person name="Fisher D.J."/>
            <person name="Atkins H.S."/>
            <person name="Hiscox T."/>
            <person name="Jost B.H."/>
            <person name="Billington S.J."/>
            <person name="Songer J.G."/>
            <person name="McClane B.A."/>
            <person name="Titball R.W."/>
            <person name="Rood J.I."/>
            <person name="Melville S.B."/>
            <person name="Paulsen I.T."/>
        </authorList>
    </citation>
    <scope>NUCLEOTIDE SEQUENCE [LARGE SCALE GENOMIC DNA]</scope>
    <source>
        <strain>SM101 / Type A</strain>
    </source>
</reference>
<sequence length="111" mass="12304">MENIKSIFYFLLAGVFEIGGGYLIWLWLRQGKSLIYGIIGALVLILYGIIPTLQPENSNFGRVYATYGGIFIVLSILCGWKVDNIIPDKFDLIGGFIALIGVLIIMYAPRG</sequence>
<keyword id="KW-1003">Cell membrane</keyword>
<keyword id="KW-0472">Membrane</keyword>
<keyword id="KW-0812">Transmembrane</keyword>
<keyword id="KW-1133">Transmembrane helix</keyword>
<gene>
    <name type="ordered locus">CPR_1507</name>
</gene>
<comment type="subcellular location">
    <subcellularLocation>
        <location evidence="1">Cell membrane</location>
        <topology evidence="1">Multi-pass membrane protein</topology>
    </subcellularLocation>
</comment>
<comment type="similarity">
    <text evidence="1">Belongs to the UPF0060 family.</text>
</comment>
<feature type="chain" id="PRO_0000282217" description="UPF0060 membrane protein CPR_1507">
    <location>
        <begin position="1"/>
        <end position="111"/>
    </location>
</feature>
<feature type="transmembrane region" description="Helical" evidence="1">
    <location>
        <begin position="7"/>
        <end position="27"/>
    </location>
</feature>
<feature type="transmembrane region" description="Helical" evidence="1">
    <location>
        <begin position="33"/>
        <end position="53"/>
    </location>
</feature>
<feature type="transmembrane region" description="Helical" evidence="1">
    <location>
        <begin position="60"/>
        <end position="80"/>
    </location>
</feature>
<feature type="transmembrane region" description="Helical" evidence="1">
    <location>
        <begin position="85"/>
        <end position="105"/>
    </location>
</feature>
<evidence type="ECO:0000255" key="1">
    <source>
        <dbReference type="HAMAP-Rule" id="MF_00010"/>
    </source>
</evidence>
<protein>
    <recommendedName>
        <fullName evidence="1">UPF0060 membrane protein CPR_1507</fullName>
    </recommendedName>
</protein>
<accession>Q0SST2</accession>
<name>Y1507_CLOPS</name>